<gene>
    <name evidence="1" type="primary">sfsA</name>
    <name type="ordered locus">AZC_4238</name>
</gene>
<feature type="chain" id="PRO_1000071269" description="Sugar fermentation stimulation protein homolog">
    <location>
        <begin position="1"/>
        <end position="237"/>
    </location>
</feature>
<comment type="similarity">
    <text evidence="1">Belongs to the SfsA family.</text>
</comment>
<name>SFSA_AZOC5</name>
<dbReference type="EMBL" id="AP009384">
    <property type="protein sequence ID" value="BAF90236.1"/>
    <property type="molecule type" value="Genomic_DNA"/>
</dbReference>
<dbReference type="RefSeq" id="WP_012172758.1">
    <property type="nucleotide sequence ID" value="NC_009937.1"/>
</dbReference>
<dbReference type="SMR" id="A8HT01"/>
<dbReference type="STRING" id="438753.AZC_4238"/>
<dbReference type="KEGG" id="azc:AZC_4238"/>
<dbReference type="eggNOG" id="COG1489">
    <property type="taxonomic scope" value="Bacteria"/>
</dbReference>
<dbReference type="HOGENOM" id="CLU_052299_2_0_5"/>
<dbReference type="Proteomes" id="UP000000270">
    <property type="component" value="Chromosome"/>
</dbReference>
<dbReference type="GO" id="GO:0003677">
    <property type="term" value="F:DNA binding"/>
    <property type="evidence" value="ECO:0007669"/>
    <property type="project" value="InterPro"/>
</dbReference>
<dbReference type="CDD" id="cd22359">
    <property type="entry name" value="SfsA-like_bacterial"/>
    <property type="match status" value="1"/>
</dbReference>
<dbReference type="Gene3D" id="2.40.50.580">
    <property type="match status" value="1"/>
</dbReference>
<dbReference type="Gene3D" id="3.40.1350.60">
    <property type="match status" value="1"/>
</dbReference>
<dbReference type="HAMAP" id="MF_00095">
    <property type="entry name" value="SfsA"/>
    <property type="match status" value="1"/>
</dbReference>
<dbReference type="InterPro" id="IPR005224">
    <property type="entry name" value="SfsA"/>
</dbReference>
<dbReference type="InterPro" id="IPR040452">
    <property type="entry name" value="SfsA_C"/>
</dbReference>
<dbReference type="InterPro" id="IPR041465">
    <property type="entry name" value="SfsA_N"/>
</dbReference>
<dbReference type="NCBIfam" id="TIGR00230">
    <property type="entry name" value="sfsA"/>
    <property type="match status" value="1"/>
</dbReference>
<dbReference type="PANTHER" id="PTHR30545">
    <property type="entry name" value="SUGAR FERMENTATION STIMULATION PROTEIN A"/>
    <property type="match status" value="1"/>
</dbReference>
<dbReference type="PANTHER" id="PTHR30545:SF2">
    <property type="entry name" value="SUGAR FERMENTATION STIMULATION PROTEIN A"/>
    <property type="match status" value="1"/>
</dbReference>
<dbReference type="Pfam" id="PF03749">
    <property type="entry name" value="SfsA"/>
    <property type="match status" value="1"/>
</dbReference>
<dbReference type="Pfam" id="PF17746">
    <property type="entry name" value="SfsA_N"/>
    <property type="match status" value="1"/>
</dbReference>
<organism>
    <name type="scientific">Azorhizobium caulinodans (strain ATCC 43989 / DSM 5975 / JCM 20966 / LMG 6465 / NBRC 14845 / NCIMB 13405 / ORS 571)</name>
    <dbReference type="NCBI Taxonomy" id="438753"/>
    <lineage>
        <taxon>Bacteria</taxon>
        <taxon>Pseudomonadati</taxon>
        <taxon>Pseudomonadota</taxon>
        <taxon>Alphaproteobacteria</taxon>
        <taxon>Hyphomicrobiales</taxon>
        <taxon>Xanthobacteraceae</taxon>
        <taxon>Azorhizobium</taxon>
    </lineage>
</organism>
<keyword id="KW-1185">Reference proteome</keyword>
<sequence>MRFPVPLVPARLVRRYKRFLADAVLEDGTELTAHVANSGAMLGLMAPGARVWLAPKSGKTAKLPYGWELVEADLGAGPELVGVNTMHPNVLVAEAIAAGKVPELAGYARMRREVKYGVNSRIDILLEDDDRPPCFVEVKNVHLMRAPGHAEFPDCATARGAKHLAELAAEVKAGHRAVMVYLSQIASARDIRLARDLDPAYGRAFDLARTAGVEAIGLVCRIDAQGIEVTGTIPMLG</sequence>
<protein>
    <recommendedName>
        <fullName evidence="1">Sugar fermentation stimulation protein homolog</fullName>
    </recommendedName>
</protein>
<reference key="1">
    <citation type="submission" date="2007-04" db="EMBL/GenBank/DDBJ databases">
        <title>Complete genome sequence of the nitrogen-fixing bacterium Azorhizobium caulinodans ORS571.</title>
        <authorList>
            <person name="Lee K.B."/>
            <person name="Backer P.D."/>
            <person name="Aono T."/>
            <person name="Liu C.T."/>
            <person name="Suzuki S."/>
            <person name="Suzuki T."/>
            <person name="Kaneko T."/>
            <person name="Yamada M."/>
            <person name="Tabata S."/>
            <person name="Kupfer D.M."/>
            <person name="Najar F.Z."/>
            <person name="Wiley G.B."/>
            <person name="Roe B."/>
            <person name="Binnewies T."/>
            <person name="Ussery D."/>
            <person name="Vereecke D."/>
            <person name="Gevers D."/>
            <person name="Holsters M."/>
            <person name="Oyaizu H."/>
        </authorList>
    </citation>
    <scope>NUCLEOTIDE SEQUENCE [LARGE SCALE GENOMIC DNA]</scope>
    <source>
        <strain>ATCC 43989 / DSM 5975 / JCM 20966 / LMG 6465 / NBRC 14845 / NCIMB 13405 / ORS 571</strain>
    </source>
</reference>
<accession>A8HT01</accession>
<proteinExistence type="inferred from homology"/>
<evidence type="ECO:0000255" key="1">
    <source>
        <dbReference type="HAMAP-Rule" id="MF_00095"/>
    </source>
</evidence>